<name>DTD_SHEPW</name>
<proteinExistence type="inferred from homology"/>
<organism>
    <name type="scientific">Shewanella piezotolerans (strain WP3 / JCM 13877)</name>
    <dbReference type="NCBI Taxonomy" id="225849"/>
    <lineage>
        <taxon>Bacteria</taxon>
        <taxon>Pseudomonadati</taxon>
        <taxon>Pseudomonadota</taxon>
        <taxon>Gammaproteobacteria</taxon>
        <taxon>Alteromonadales</taxon>
        <taxon>Shewanellaceae</taxon>
        <taxon>Shewanella</taxon>
    </lineage>
</organism>
<reference key="1">
    <citation type="journal article" date="2008" name="PLoS ONE">
        <title>Environmental adaptation: genomic analysis of the piezotolerant and psychrotolerant deep-sea iron reducing bacterium Shewanella piezotolerans WP3.</title>
        <authorList>
            <person name="Wang F."/>
            <person name="Wang J."/>
            <person name="Jian H."/>
            <person name="Zhang B."/>
            <person name="Li S."/>
            <person name="Wang F."/>
            <person name="Zeng X."/>
            <person name="Gao L."/>
            <person name="Bartlett D.H."/>
            <person name="Yu J."/>
            <person name="Hu S."/>
            <person name="Xiao X."/>
        </authorList>
    </citation>
    <scope>NUCLEOTIDE SEQUENCE [LARGE SCALE GENOMIC DNA]</scope>
    <source>
        <strain>WP3 / JCM 13877</strain>
    </source>
</reference>
<keyword id="KW-0963">Cytoplasm</keyword>
<keyword id="KW-0378">Hydrolase</keyword>
<keyword id="KW-0694">RNA-binding</keyword>
<keyword id="KW-0820">tRNA-binding</keyword>
<dbReference type="EC" id="3.1.1.96" evidence="1"/>
<dbReference type="EMBL" id="CP000472">
    <property type="protein sequence ID" value="ACJ27123.1"/>
    <property type="molecule type" value="Genomic_DNA"/>
</dbReference>
<dbReference type="RefSeq" id="WP_020910506.1">
    <property type="nucleotide sequence ID" value="NC_011566.1"/>
</dbReference>
<dbReference type="SMR" id="B8CHJ7"/>
<dbReference type="STRING" id="225849.swp_0283"/>
<dbReference type="KEGG" id="swp:swp_0283"/>
<dbReference type="eggNOG" id="COG1490">
    <property type="taxonomic scope" value="Bacteria"/>
</dbReference>
<dbReference type="HOGENOM" id="CLU_076901_1_1_6"/>
<dbReference type="OrthoDB" id="9801395at2"/>
<dbReference type="Proteomes" id="UP000000753">
    <property type="component" value="Chromosome"/>
</dbReference>
<dbReference type="GO" id="GO:0005737">
    <property type="term" value="C:cytoplasm"/>
    <property type="evidence" value="ECO:0007669"/>
    <property type="project" value="UniProtKB-SubCell"/>
</dbReference>
<dbReference type="GO" id="GO:0051500">
    <property type="term" value="F:D-tyrosyl-tRNA(Tyr) deacylase activity"/>
    <property type="evidence" value="ECO:0007669"/>
    <property type="project" value="TreeGrafter"/>
</dbReference>
<dbReference type="GO" id="GO:0106026">
    <property type="term" value="F:Gly-tRNA(Ala) deacylase activity"/>
    <property type="evidence" value="ECO:0007669"/>
    <property type="project" value="UniProtKB-UniRule"/>
</dbReference>
<dbReference type="GO" id="GO:0043908">
    <property type="term" value="F:Ser(Gly)-tRNA(Ala) hydrolase activity"/>
    <property type="evidence" value="ECO:0007669"/>
    <property type="project" value="UniProtKB-UniRule"/>
</dbReference>
<dbReference type="GO" id="GO:0000049">
    <property type="term" value="F:tRNA binding"/>
    <property type="evidence" value="ECO:0007669"/>
    <property type="project" value="UniProtKB-UniRule"/>
</dbReference>
<dbReference type="GO" id="GO:0019478">
    <property type="term" value="P:D-amino acid catabolic process"/>
    <property type="evidence" value="ECO:0007669"/>
    <property type="project" value="UniProtKB-UniRule"/>
</dbReference>
<dbReference type="CDD" id="cd00563">
    <property type="entry name" value="Dtyr_deacylase"/>
    <property type="match status" value="1"/>
</dbReference>
<dbReference type="FunFam" id="3.50.80.10:FF:000001">
    <property type="entry name" value="D-aminoacyl-tRNA deacylase"/>
    <property type="match status" value="1"/>
</dbReference>
<dbReference type="Gene3D" id="3.50.80.10">
    <property type="entry name" value="D-tyrosyl-tRNA(Tyr) deacylase"/>
    <property type="match status" value="1"/>
</dbReference>
<dbReference type="HAMAP" id="MF_00518">
    <property type="entry name" value="Deacylase_Dtd"/>
    <property type="match status" value="1"/>
</dbReference>
<dbReference type="InterPro" id="IPR003732">
    <property type="entry name" value="Daa-tRNA_deacyls_DTD"/>
</dbReference>
<dbReference type="InterPro" id="IPR023509">
    <property type="entry name" value="DTD-like_sf"/>
</dbReference>
<dbReference type="NCBIfam" id="TIGR00256">
    <property type="entry name" value="D-aminoacyl-tRNA deacylase"/>
    <property type="match status" value="1"/>
</dbReference>
<dbReference type="PANTHER" id="PTHR10472:SF5">
    <property type="entry name" value="D-AMINOACYL-TRNA DEACYLASE 1"/>
    <property type="match status" value="1"/>
</dbReference>
<dbReference type="PANTHER" id="PTHR10472">
    <property type="entry name" value="D-TYROSYL-TRNA TYR DEACYLASE"/>
    <property type="match status" value="1"/>
</dbReference>
<dbReference type="Pfam" id="PF02580">
    <property type="entry name" value="Tyr_Deacylase"/>
    <property type="match status" value="1"/>
</dbReference>
<dbReference type="SUPFAM" id="SSF69500">
    <property type="entry name" value="DTD-like"/>
    <property type="match status" value="1"/>
</dbReference>
<accession>B8CHJ7</accession>
<protein>
    <recommendedName>
        <fullName evidence="1">D-aminoacyl-tRNA deacylase</fullName>
        <shortName evidence="1">DTD</shortName>
        <ecNumber evidence="1">3.1.1.96</ecNumber>
    </recommendedName>
    <alternativeName>
        <fullName evidence="1">Gly-tRNA(Ala) deacylase</fullName>
    </alternativeName>
</protein>
<feature type="chain" id="PRO_1000127573" description="D-aminoacyl-tRNA deacylase">
    <location>
        <begin position="1"/>
        <end position="145"/>
    </location>
</feature>
<feature type="short sequence motif" description="Gly-cisPro motif, important for rejection of L-amino acids" evidence="1">
    <location>
        <begin position="137"/>
        <end position="138"/>
    </location>
</feature>
<gene>
    <name evidence="1" type="primary">dtd</name>
    <name type="ordered locus">swp_0283</name>
</gene>
<comment type="function">
    <text evidence="1">An aminoacyl-tRNA editing enzyme that deacylates mischarged D-aminoacyl-tRNAs. Also deacylates mischarged glycyl-tRNA(Ala), protecting cells against glycine mischarging by AlaRS. Acts via tRNA-based rather than protein-based catalysis; rejects L-amino acids rather than detecting D-amino acids in the active site. By recycling D-aminoacyl-tRNA to D-amino acids and free tRNA molecules, this enzyme counteracts the toxicity associated with the formation of D-aminoacyl-tRNA entities in vivo and helps enforce protein L-homochirality.</text>
</comment>
<comment type="catalytic activity">
    <reaction evidence="1">
        <text>glycyl-tRNA(Ala) + H2O = tRNA(Ala) + glycine + H(+)</text>
        <dbReference type="Rhea" id="RHEA:53744"/>
        <dbReference type="Rhea" id="RHEA-COMP:9657"/>
        <dbReference type="Rhea" id="RHEA-COMP:13640"/>
        <dbReference type="ChEBI" id="CHEBI:15377"/>
        <dbReference type="ChEBI" id="CHEBI:15378"/>
        <dbReference type="ChEBI" id="CHEBI:57305"/>
        <dbReference type="ChEBI" id="CHEBI:78442"/>
        <dbReference type="ChEBI" id="CHEBI:78522"/>
        <dbReference type="EC" id="3.1.1.96"/>
    </reaction>
</comment>
<comment type="catalytic activity">
    <reaction evidence="1">
        <text>a D-aminoacyl-tRNA + H2O = a tRNA + a D-alpha-amino acid + H(+)</text>
        <dbReference type="Rhea" id="RHEA:13953"/>
        <dbReference type="Rhea" id="RHEA-COMP:10123"/>
        <dbReference type="Rhea" id="RHEA-COMP:10124"/>
        <dbReference type="ChEBI" id="CHEBI:15377"/>
        <dbReference type="ChEBI" id="CHEBI:15378"/>
        <dbReference type="ChEBI" id="CHEBI:59871"/>
        <dbReference type="ChEBI" id="CHEBI:78442"/>
        <dbReference type="ChEBI" id="CHEBI:79333"/>
        <dbReference type="EC" id="3.1.1.96"/>
    </reaction>
</comment>
<comment type="subunit">
    <text evidence="1">Homodimer.</text>
</comment>
<comment type="subcellular location">
    <subcellularLocation>
        <location evidence="1">Cytoplasm</location>
    </subcellularLocation>
</comment>
<comment type="domain">
    <text evidence="1">A Gly-cisPro motif from one monomer fits into the active site of the other monomer to allow specific chiral rejection of L-amino acids.</text>
</comment>
<comment type="similarity">
    <text evidence="1">Belongs to the DTD family.</text>
</comment>
<evidence type="ECO:0000255" key="1">
    <source>
        <dbReference type="HAMAP-Rule" id="MF_00518"/>
    </source>
</evidence>
<sequence>MIALIQRVSEANVVVDGETIGEIDKGLLVLLGVEREDDLAKMEKLATKVMSYRVFSDDNGKMNLNLEQAGGSLLVVSQFTLAADTGRGLRPSFSGAGTPEQARELYQAFVDFCLSKGVNTQTGEFAADMKVSLVNDGPVTFNLQV</sequence>